<proteinExistence type="inferred from homology"/>
<gene>
    <name type="primary">sat</name>
    <name type="ordered locus">PYRAB11700</name>
    <name type="ORF">PAB1595</name>
</gene>
<sequence length="379" mass="44026">MVSKPHGGKLIRRIAAPRTRERILSEQHEYPKVQIDHGRAIDLENIAHGVYSPLKGFLTREDFESVLDHMRLSDDTPWTIPIVLDVEKPEFEEGDAILLYHKETPIARMHVEDIYTYEKEEFALKVFKTKDANHPGVAKVYSMGKYLVGGEIELLNELPNPFAKYTLRPIETRVLFKEKGWKTVVAFQTRNVPHLGHEYVQKAALTFVDGLFINPVLGRKKRGDYKDEVIIKAYEVLFEHYYPKDVAVLATVRYEMRYAGPREAIHHAIMRKNFGATHFIVGRDHAGVGNYYGPYEAWDLFDEFPDLGITPMFIREAFYCKKCGGMVNEKICPHDEKYHVRISGTKLRNMIMRGEKPPEYMMRPEVYEVIRSFDNPFVE</sequence>
<protein>
    <recommendedName>
        <fullName>Sulfate adenylyltransferase</fullName>
        <ecNumber>2.7.7.4</ecNumber>
    </recommendedName>
    <alternativeName>
        <fullName>ATP-sulfurylase</fullName>
    </alternativeName>
    <alternativeName>
        <fullName>Sulfate adenylate transferase</fullName>
        <shortName>SAT</shortName>
    </alternativeName>
</protein>
<reference key="1">
    <citation type="journal article" date="2003" name="Mol. Microbiol.">
        <title>An integrated analysis of the genome of the hyperthermophilic archaeon Pyrococcus abyssi.</title>
        <authorList>
            <person name="Cohen G.N."/>
            <person name="Barbe V."/>
            <person name="Flament D."/>
            <person name="Galperin M."/>
            <person name="Heilig R."/>
            <person name="Lecompte O."/>
            <person name="Poch O."/>
            <person name="Prieur D."/>
            <person name="Querellou J."/>
            <person name="Ripp R."/>
            <person name="Thierry J.-C."/>
            <person name="Van der Oost J."/>
            <person name="Weissenbach J."/>
            <person name="Zivanovic Y."/>
            <person name="Forterre P."/>
        </authorList>
    </citation>
    <scope>NUCLEOTIDE SEQUENCE [LARGE SCALE GENOMIC DNA]</scope>
    <source>
        <strain>GE5 / Orsay</strain>
    </source>
</reference>
<reference key="2">
    <citation type="journal article" date="2012" name="Curr. Microbiol.">
        <title>Re-annotation of two hyperthermophilic archaea Pyrococcus abyssi GE5 and Pyrococcus furiosus DSM 3638.</title>
        <authorList>
            <person name="Gao J."/>
            <person name="Wang J."/>
        </authorList>
    </citation>
    <scope>GENOME REANNOTATION</scope>
    <source>
        <strain>GE5 / Orsay</strain>
    </source>
</reference>
<organism>
    <name type="scientific">Pyrococcus abyssi (strain GE5 / Orsay)</name>
    <dbReference type="NCBI Taxonomy" id="272844"/>
    <lineage>
        <taxon>Archaea</taxon>
        <taxon>Methanobacteriati</taxon>
        <taxon>Methanobacteriota</taxon>
        <taxon>Thermococci</taxon>
        <taxon>Thermococcales</taxon>
        <taxon>Thermococcaceae</taxon>
        <taxon>Pyrococcus</taxon>
    </lineage>
</organism>
<name>SAT_PYRAB</name>
<evidence type="ECO:0000305" key="1"/>
<keyword id="KW-0067">ATP-binding</keyword>
<keyword id="KW-0547">Nucleotide-binding</keyword>
<keyword id="KW-0548">Nucleotidyltransferase</keyword>
<keyword id="KW-0808">Transferase</keyword>
<comment type="catalytic activity">
    <reaction>
        <text>sulfate + ATP + H(+) = adenosine 5'-phosphosulfate + diphosphate</text>
        <dbReference type="Rhea" id="RHEA:18133"/>
        <dbReference type="ChEBI" id="CHEBI:15378"/>
        <dbReference type="ChEBI" id="CHEBI:16189"/>
        <dbReference type="ChEBI" id="CHEBI:30616"/>
        <dbReference type="ChEBI" id="CHEBI:33019"/>
        <dbReference type="ChEBI" id="CHEBI:58243"/>
        <dbReference type="EC" id="2.7.7.4"/>
    </reaction>
</comment>
<comment type="pathway">
    <text>Sulfur metabolism; hydrogen sulfide biosynthesis; sulfite from sulfate: step 1/3.</text>
</comment>
<comment type="similarity">
    <text evidence="1">Belongs to the sulfate adenylyltransferase family.</text>
</comment>
<dbReference type="EC" id="2.7.7.4"/>
<dbReference type="EMBL" id="AJ248286">
    <property type="protein sequence ID" value="CAB50081.1"/>
    <property type="molecule type" value="Genomic_DNA"/>
</dbReference>
<dbReference type="EMBL" id="HE613800">
    <property type="protein sequence ID" value="CCE70594.1"/>
    <property type="molecule type" value="Genomic_DNA"/>
</dbReference>
<dbReference type="PIR" id="D75097">
    <property type="entry name" value="D75097"/>
</dbReference>
<dbReference type="RefSeq" id="WP_010868287.1">
    <property type="nucleotide sequence ID" value="NC_000868.1"/>
</dbReference>
<dbReference type="SMR" id="P56863"/>
<dbReference type="STRING" id="272844.PAB1595"/>
<dbReference type="KEGG" id="pab:PAB1595"/>
<dbReference type="PATRIC" id="fig|272844.11.peg.1240"/>
<dbReference type="eggNOG" id="arCOG04191">
    <property type="taxonomic scope" value="Archaea"/>
</dbReference>
<dbReference type="HOGENOM" id="CLU_022950_1_1_2"/>
<dbReference type="OrthoDB" id="6358at2157"/>
<dbReference type="PhylomeDB" id="P56863"/>
<dbReference type="UniPathway" id="UPA00140">
    <property type="reaction ID" value="UER00204"/>
</dbReference>
<dbReference type="Proteomes" id="UP000000810">
    <property type="component" value="Chromosome"/>
</dbReference>
<dbReference type="Proteomes" id="UP000009139">
    <property type="component" value="Chromosome"/>
</dbReference>
<dbReference type="GO" id="GO:0005524">
    <property type="term" value="F:ATP binding"/>
    <property type="evidence" value="ECO:0007669"/>
    <property type="project" value="UniProtKB-KW"/>
</dbReference>
<dbReference type="GO" id="GO:0004781">
    <property type="term" value="F:sulfate adenylyltransferase (ATP) activity"/>
    <property type="evidence" value="ECO:0007669"/>
    <property type="project" value="UniProtKB-UniRule"/>
</dbReference>
<dbReference type="GO" id="GO:0070814">
    <property type="term" value="P:hydrogen sulfide biosynthetic process"/>
    <property type="evidence" value="ECO:0007669"/>
    <property type="project" value="UniProtKB-UniRule"/>
</dbReference>
<dbReference type="GO" id="GO:0000103">
    <property type="term" value="P:sulfate assimilation"/>
    <property type="evidence" value="ECO:0007669"/>
    <property type="project" value="UniProtKB-UniRule"/>
</dbReference>
<dbReference type="CDD" id="cd00517">
    <property type="entry name" value="ATPS"/>
    <property type="match status" value="1"/>
</dbReference>
<dbReference type="Gene3D" id="3.40.50.620">
    <property type="entry name" value="HUPs"/>
    <property type="match status" value="1"/>
</dbReference>
<dbReference type="Gene3D" id="3.10.400.10">
    <property type="entry name" value="Sulfate adenylyltransferase"/>
    <property type="match status" value="1"/>
</dbReference>
<dbReference type="HAMAP" id="MF_00066">
    <property type="entry name" value="Sulf_adenylyltr"/>
    <property type="match status" value="1"/>
</dbReference>
<dbReference type="InterPro" id="IPR025980">
    <property type="entry name" value="ATP-Sase_PUA-like_dom"/>
</dbReference>
<dbReference type="InterPro" id="IPR015947">
    <property type="entry name" value="PUA-like_sf"/>
</dbReference>
<dbReference type="InterPro" id="IPR014729">
    <property type="entry name" value="Rossmann-like_a/b/a_fold"/>
</dbReference>
<dbReference type="InterPro" id="IPR020792">
    <property type="entry name" value="SO4_adenylyltransferase_pro"/>
</dbReference>
<dbReference type="InterPro" id="IPR024951">
    <property type="entry name" value="Sulfurylase_cat_dom"/>
</dbReference>
<dbReference type="InterPro" id="IPR002650">
    <property type="entry name" value="Sulphate_adenylyltransferase"/>
</dbReference>
<dbReference type="NCBIfam" id="NF003166">
    <property type="entry name" value="PRK04149.1"/>
    <property type="match status" value="1"/>
</dbReference>
<dbReference type="NCBIfam" id="TIGR00339">
    <property type="entry name" value="sopT"/>
    <property type="match status" value="1"/>
</dbReference>
<dbReference type="PANTHER" id="PTHR43509">
    <property type="match status" value="1"/>
</dbReference>
<dbReference type="PANTHER" id="PTHR43509:SF1">
    <property type="entry name" value="SULFATE ADENYLYLTRANSFERASE"/>
    <property type="match status" value="1"/>
</dbReference>
<dbReference type="Pfam" id="PF01747">
    <property type="entry name" value="ATP-sulfurylase"/>
    <property type="match status" value="1"/>
</dbReference>
<dbReference type="Pfam" id="PF14306">
    <property type="entry name" value="PUA_2"/>
    <property type="match status" value="1"/>
</dbReference>
<dbReference type="SUPFAM" id="SSF52374">
    <property type="entry name" value="Nucleotidylyl transferase"/>
    <property type="match status" value="1"/>
</dbReference>
<dbReference type="SUPFAM" id="SSF88697">
    <property type="entry name" value="PUA domain-like"/>
    <property type="match status" value="1"/>
</dbReference>
<feature type="chain" id="PRO_0000105947" description="Sulfate adenylyltransferase">
    <location>
        <begin position="1"/>
        <end position="379"/>
    </location>
</feature>
<accession>P56863</accession>
<accession>G8ZKF1</accession>